<name>RLMF_PSESM</name>
<evidence type="ECO:0000255" key="1">
    <source>
        <dbReference type="HAMAP-Rule" id="MF_01848"/>
    </source>
</evidence>
<evidence type="ECO:0000256" key="2">
    <source>
        <dbReference type="SAM" id="MobiDB-lite"/>
    </source>
</evidence>
<evidence type="ECO:0000305" key="3"/>
<reference key="1">
    <citation type="journal article" date="2003" name="Proc. Natl. Acad. Sci. U.S.A.">
        <title>The complete genome sequence of the Arabidopsis and tomato pathogen Pseudomonas syringae pv. tomato DC3000.</title>
        <authorList>
            <person name="Buell C.R."/>
            <person name="Joardar V."/>
            <person name="Lindeberg M."/>
            <person name="Selengut J."/>
            <person name="Paulsen I.T."/>
            <person name="Gwinn M.L."/>
            <person name="Dodson R.J."/>
            <person name="DeBoy R.T."/>
            <person name="Durkin A.S."/>
            <person name="Kolonay J.F."/>
            <person name="Madupu R."/>
            <person name="Daugherty S.C."/>
            <person name="Brinkac L.M."/>
            <person name="Beanan M.J."/>
            <person name="Haft D.H."/>
            <person name="Nelson W.C."/>
            <person name="Davidsen T.M."/>
            <person name="Zafar N."/>
            <person name="Zhou L."/>
            <person name="Liu J."/>
            <person name="Yuan Q."/>
            <person name="Khouri H.M."/>
            <person name="Fedorova N.B."/>
            <person name="Tran B."/>
            <person name="Russell D."/>
            <person name="Berry K.J."/>
            <person name="Utterback T.R."/>
            <person name="Van Aken S.E."/>
            <person name="Feldblyum T.V."/>
            <person name="D'Ascenzo M."/>
            <person name="Deng W.-L."/>
            <person name="Ramos A.R."/>
            <person name="Alfano J.R."/>
            <person name="Cartinhour S."/>
            <person name="Chatterjee A.K."/>
            <person name="Delaney T.P."/>
            <person name="Lazarowitz S.G."/>
            <person name="Martin G.B."/>
            <person name="Schneider D.J."/>
            <person name="Tang X."/>
            <person name="Bender C.L."/>
            <person name="White O."/>
            <person name="Fraser C.M."/>
            <person name="Collmer A."/>
        </authorList>
    </citation>
    <scope>NUCLEOTIDE SEQUENCE [LARGE SCALE GENOMIC DNA]</scope>
    <source>
        <strain>ATCC BAA-871 / DC3000</strain>
    </source>
</reference>
<gene>
    <name evidence="1" type="primary">rlmF</name>
    <name type="ordered locus">PSPTO_1267</name>
</gene>
<protein>
    <recommendedName>
        <fullName evidence="1">Ribosomal RNA large subunit methyltransferase F</fullName>
        <ecNumber evidence="1">2.1.1.181</ecNumber>
    </recommendedName>
    <alternativeName>
        <fullName evidence="1">23S rRNA mA1618 methyltransferase</fullName>
    </alternativeName>
    <alternativeName>
        <fullName evidence="1">rRNA adenine N-6-methyltransferase</fullName>
    </alternativeName>
</protein>
<proteinExistence type="inferred from homology"/>
<dbReference type="EC" id="2.1.1.181" evidence="1"/>
<dbReference type="EMBL" id="AE016853">
    <property type="protein sequence ID" value="AAO54792.1"/>
    <property type="status" value="ALT_INIT"/>
    <property type="molecule type" value="Genomic_DNA"/>
</dbReference>
<dbReference type="RefSeq" id="NP_791097.3">
    <property type="nucleotide sequence ID" value="NC_004578.1"/>
</dbReference>
<dbReference type="RefSeq" id="WP_032621684.1">
    <property type="nucleotide sequence ID" value="NC_004578.1"/>
</dbReference>
<dbReference type="SMR" id="Q887M4"/>
<dbReference type="STRING" id="223283.PSPTO_1267"/>
<dbReference type="GeneID" id="1182903"/>
<dbReference type="KEGG" id="pst:PSPTO_1267"/>
<dbReference type="PATRIC" id="fig|223283.9.peg.1289"/>
<dbReference type="eggNOG" id="COG3129">
    <property type="taxonomic scope" value="Bacteria"/>
</dbReference>
<dbReference type="HOGENOM" id="CLU_027534_3_0_6"/>
<dbReference type="OrthoDB" id="1115728at2"/>
<dbReference type="Proteomes" id="UP000002515">
    <property type="component" value="Chromosome"/>
</dbReference>
<dbReference type="GO" id="GO:0005737">
    <property type="term" value="C:cytoplasm"/>
    <property type="evidence" value="ECO:0007669"/>
    <property type="project" value="UniProtKB-SubCell"/>
</dbReference>
<dbReference type="GO" id="GO:0052907">
    <property type="term" value="F:23S rRNA (adenine(1618)-N(6))-methyltransferase activity"/>
    <property type="evidence" value="ECO:0007669"/>
    <property type="project" value="UniProtKB-EC"/>
</dbReference>
<dbReference type="GO" id="GO:0070475">
    <property type="term" value="P:rRNA base methylation"/>
    <property type="evidence" value="ECO:0007669"/>
    <property type="project" value="TreeGrafter"/>
</dbReference>
<dbReference type="CDD" id="cd02440">
    <property type="entry name" value="AdoMet_MTases"/>
    <property type="match status" value="1"/>
</dbReference>
<dbReference type="Gene3D" id="3.40.50.150">
    <property type="entry name" value="Vaccinia Virus protein VP39"/>
    <property type="match status" value="1"/>
</dbReference>
<dbReference type="HAMAP" id="MF_01848">
    <property type="entry name" value="23SrRNA_methyltr_F"/>
    <property type="match status" value="1"/>
</dbReference>
<dbReference type="InterPro" id="IPR010286">
    <property type="entry name" value="METTL16/RlmF"/>
</dbReference>
<dbReference type="InterPro" id="IPR016909">
    <property type="entry name" value="rRNA_lsu_MeTfrase_F"/>
</dbReference>
<dbReference type="InterPro" id="IPR029063">
    <property type="entry name" value="SAM-dependent_MTases_sf"/>
</dbReference>
<dbReference type="NCBIfam" id="NF008725">
    <property type="entry name" value="PRK11727.1"/>
    <property type="match status" value="1"/>
</dbReference>
<dbReference type="PANTHER" id="PTHR13393:SF0">
    <property type="entry name" value="RNA N6-ADENOSINE-METHYLTRANSFERASE METTL16"/>
    <property type="match status" value="1"/>
</dbReference>
<dbReference type="PANTHER" id="PTHR13393">
    <property type="entry name" value="SAM-DEPENDENT METHYLTRANSFERASE"/>
    <property type="match status" value="1"/>
</dbReference>
<dbReference type="Pfam" id="PF05971">
    <property type="entry name" value="Methyltransf_10"/>
    <property type="match status" value="1"/>
</dbReference>
<dbReference type="PIRSF" id="PIRSF029038">
    <property type="entry name" value="Mtase_YbiN_prd"/>
    <property type="match status" value="1"/>
</dbReference>
<dbReference type="SUPFAM" id="SSF53335">
    <property type="entry name" value="S-adenosyl-L-methionine-dependent methyltransferases"/>
    <property type="match status" value="1"/>
</dbReference>
<organism>
    <name type="scientific">Pseudomonas syringae pv. tomato (strain ATCC BAA-871 / DC3000)</name>
    <dbReference type="NCBI Taxonomy" id="223283"/>
    <lineage>
        <taxon>Bacteria</taxon>
        <taxon>Pseudomonadati</taxon>
        <taxon>Pseudomonadota</taxon>
        <taxon>Gammaproteobacteria</taxon>
        <taxon>Pseudomonadales</taxon>
        <taxon>Pseudomonadaceae</taxon>
        <taxon>Pseudomonas</taxon>
    </lineage>
</organism>
<feature type="chain" id="PRO_0000349939" description="Ribosomal RNA large subunit methyltransferase F">
    <location>
        <begin position="1"/>
        <end position="328"/>
    </location>
</feature>
<feature type="region of interest" description="Disordered" evidence="2">
    <location>
        <begin position="1"/>
        <end position="38"/>
    </location>
</feature>
<keyword id="KW-0963">Cytoplasm</keyword>
<keyword id="KW-0489">Methyltransferase</keyword>
<keyword id="KW-1185">Reference proteome</keyword>
<keyword id="KW-0698">rRNA processing</keyword>
<keyword id="KW-0949">S-adenosyl-L-methionine</keyword>
<keyword id="KW-0808">Transferase</keyword>
<comment type="function">
    <text evidence="1">Specifically methylates the adenine in position 1618 of 23S rRNA.</text>
</comment>
<comment type="catalytic activity">
    <reaction evidence="1">
        <text>adenosine(1618) in 23S rRNA + S-adenosyl-L-methionine = N(6)-methyladenosine(1618) in 23S rRNA + S-adenosyl-L-homocysteine + H(+)</text>
        <dbReference type="Rhea" id="RHEA:16497"/>
        <dbReference type="Rhea" id="RHEA-COMP:10229"/>
        <dbReference type="Rhea" id="RHEA-COMP:10231"/>
        <dbReference type="ChEBI" id="CHEBI:15378"/>
        <dbReference type="ChEBI" id="CHEBI:57856"/>
        <dbReference type="ChEBI" id="CHEBI:59789"/>
        <dbReference type="ChEBI" id="CHEBI:74411"/>
        <dbReference type="ChEBI" id="CHEBI:74449"/>
        <dbReference type="EC" id="2.1.1.181"/>
    </reaction>
</comment>
<comment type="subcellular location">
    <subcellularLocation>
        <location evidence="1">Cytoplasm</location>
    </subcellularLocation>
</comment>
<comment type="similarity">
    <text evidence="1">Belongs to the methyltransferase superfamily. METTL16/RlmF family.</text>
</comment>
<comment type="sequence caution" evidence="3">
    <conflict type="erroneous initiation">
        <sequence resource="EMBL-CDS" id="AAO54792"/>
    </conflict>
</comment>
<sequence length="328" mass="35981">MTDTPKPPRKKPQRPAKPAAPREKATLHPRNRHQGHYDFPKLIKSSPELAAFVILNPYGKESIDFANPQAVRVFNRALLKAFYGIAHWDIPADYLCPPIPGRADYLHFLADVLAEDHEGVIPRGASVKALDIGTGANCIYPLLGHSDYGWQFVGSDIDSTAVAAATAIVKANGLHKAISVRLQGNRKQILLGLCDSNERFDVSLCNPPFHASLDEAQRGSQRKWRALGKADPKRKLPVLNFGGQSQELWCEGGEIGFVTQLIQESARLPGLVVWFSTLVSKASNLPPIQSALKKAGALEVKVVEMGQGQKQSRFVAWTFLDKAQRTPG</sequence>
<accession>Q887M4</accession>